<name>G6PI_CHLTE</name>
<organism>
    <name type="scientific">Chlorobaculum tepidum (strain ATCC 49652 / DSM 12025 / NBRC 103806 / TLS)</name>
    <name type="common">Chlorobium tepidum</name>
    <dbReference type="NCBI Taxonomy" id="194439"/>
    <lineage>
        <taxon>Bacteria</taxon>
        <taxon>Pseudomonadati</taxon>
        <taxon>Chlorobiota</taxon>
        <taxon>Chlorobiia</taxon>
        <taxon>Chlorobiales</taxon>
        <taxon>Chlorobiaceae</taxon>
        <taxon>Chlorobaculum</taxon>
    </lineage>
</organism>
<gene>
    <name evidence="1" type="primary">pgi</name>
    <name type="ordered locus">CT0988</name>
</gene>
<protein>
    <recommendedName>
        <fullName evidence="1">Glucose-6-phosphate isomerase</fullName>
        <shortName evidence="1">GPI</shortName>
        <ecNumber evidence="1">5.3.1.9</ecNumber>
    </recommendedName>
    <alternativeName>
        <fullName evidence="1">Phosphoglucose isomerase</fullName>
        <shortName evidence="1">PGI</shortName>
    </alternativeName>
    <alternativeName>
        <fullName evidence="1">Phosphohexose isomerase</fullName>
        <shortName evidence="1">PHI</shortName>
    </alternativeName>
</protein>
<keyword id="KW-0963">Cytoplasm</keyword>
<keyword id="KW-0312">Gluconeogenesis</keyword>
<keyword id="KW-0324">Glycolysis</keyword>
<keyword id="KW-0413">Isomerase</keyword>
<keyword id="KW-1185">Reference proteome</keyword>
<reference key="1">
    <citation type="journal article" date="2002" name="Proc. Natl. Acad. Sci. U.S.A.">
        <title>The complete genome sequence of Chlorobium tepidum TLS, a photosynthetic, anaerobic, green-sulfur bacterium.</title>
        <authorList>
            <person name="Eisen J.A."/>
            <person name="Nelson K.E."/>
            <person name="Paulsen I.T."/>
            <person name="Heidelberg J.F."/>
            <person name="Wu M."/>
            <person name="Dodson R.J."/>
            <person name="DeBoy R.T."/>
            <person name="Gwinn M.L."/>
            <person name="Nelson W.C."/>
            <person name="Haft D.H."/>
            <person name="Hickey E.K."/>
            <person name="Peterson J.D."/>
            <person name="Durkin A.S."/>
            <person name="Kolonay J.F."/>
            <person name="Yang F."/>
            <person name="Holt I.E."/>
            <person name="Umayam L.A."/>
            <person name="Mason T.M."/>
            <person name="Brenner M."/>
            <person name="Shea T.P."/>
            <person name="Parksey D.S."/>
            <person name="Nierman W.C."/>
            <person name="Feldblyum T.V."/>
            <person name="Hansen C.L."/>
            <person name="Craven M.B."/>
            <person name="Radune D."/>
            <person name="Vamathevan J.J."/>
            <person name="Khouri H.M."/>
            <person name="White O."/>
            <person name="Gruber T.M."/>
            <person name="Ketchum K.A."/>
            <person name="Venter J.C."/>
            <person name="Tettelin H."/>
            <person name="Bryant D.A."/>
            <person name="Fraser C.M."/>
        </authorList>
    </citation>
    <scope>NUCLEOTIDE SEQUENCE [LARGE SCALE GENOMIC DNA]</scope>
    <source>
        <strain>ATCC 49652 / DSM 12025 / NBRC 103806 / TLS</strain>
    </source>
</reference>
<sequence length="559" mass="63089">MYLSRSAEWSALESHYQDISHQAMIDLFSTDPNRHERFSLSFNAIHLDYSKNRISARTMELLMDLVRRSGIEKKRRQMFEGEQINFTEHRSVLHTALRRPPGYTMTIDGNDVASEVSDVLDQMKAFCKKVISGEWKGYTGKRITDVVNIGIGGSDLGPFMVTEALKPFAHGKLKVHFVSNVDGSHLVETLRGLNPETTLFIIASKTFTTQETLANAVSARAWFLVKAGNRDHVAKHFVAVSTNREKVEEFGIDPDNMFRFWDWVGGRYSLWSAIGLSIALYLGFDRFRELLAGAHAMDEHFLNAPLEENMPMILAMLGIWYNNFFGAHSQAIIPYDQYLHRFPAYLQQLDMESNGKRVDRAGHEVDYATGPVIWGEPGTNAQHAFFQLLHQGTEIVPVDFIVSLKSQNPVGEHHDMLVANCFAQSEALMKGKSEAEARAELEAAGLSGGDLEKLLPHKLFPGNRPTNTIVLDELNPFNLGSLIALYEHKVFVQGVVWNINSFDQWGVELGKQLAKAILPEFDAVDPVETHDASTNALINRYRQFRNGLKFPKSNQLKMF</sequence>
<dbReference type="EC" id="5.3.1.9" evidence="1"/>
<dbReference type="EMBL" id="AE006470">
    <property type="protein sequence ID" value="AAM72223.1"/>
    <property type="molecule type" value="Genomic_DNA"/>
</dbReference>
<dbReference type="RefSeq" id="NP_661881.1">
    <property type="nucleotide sequence ID" value="NC_002932.3"/>
</dbReference>
<dbReference type="RefSeq" id="WP_010932668.1">
    <property type="nucleotide sequence ID" value="NC_002932.3"/>
</dbReference>
<dbReference type="SMR" id="Q8KDQ7"/>
<dbReference type="STRING" id="194439.CT0988"/>
<dbReference type="EnsemblBacteria" id="AAM72223">
    <property type="protein sequence ID" value="AAM72223"/>
    <property type="gene ID" value="CT0988"/>
</dbReference>
<dbReference type="KEGG" id="cte:CT0988"/>
<dbReference type="PATRIC" id="fig|194439.7.peg.899"/>
<dbReference type="eggNOG" id="COG0166">
    <property type="taxonomic scope" value="Bacteria"/>
</dbReference>
<dbReference type="HOGENOM" id="CLU_017947_3_1_10"/>
<dbReference type="OrthoDB" id="140919at2"/>
<dbReference type="UniPathway" id="UPA00109">
    <property type="reaction ID" value="UER00181"/>
</dbReference>
<dbReference type="UniPathway" id="UPA00138"/>
<dbReference type="Proteomes" id="UP000001007">
    <property type="component" value="Chromosome"/>
</dbReference>
<dbReference type="GO" id="GO:0005829">
    <property type="term" value="C:cytosol"/>
    <property type="evidence" value="ECO:0007669"/>
    <property type="project" value="TreeGrafter"/>
</dbReference>
<dbReference type="GO" id="GO:0097367">
    <property type="term" value="F:carbohydrate derivative binding"/>
    <property type="evidence" value="ECO:0007669"/>
    <property type="project" value="InterPro"/>
</dbReference>
<dbReference type="GO" id="GO:0004347">
    <property type="term" value="F:glucose-6-phosphate isomerase activity"/>
    <property type="evidence" value="ECO:0007669"/>
    <property type="project" value="UniProtKB-UniRule"/>
</dbReference>
<dbReference type="GO" id="GO:0048029">
    <property type="term" value="F:monosaccharide binding"/>
    <property type="evidence" value="ECO:0007669"/>
    <property type="project" value="TreeGrafter"/>
</dbReference>
<dbReference type="GO" id="GO:0006094">
    <property type="term" value="P:gluconeogenesis"/>
    <property type="evidence" value="ECO:0007669"/>
    <property type="project" value="UniProtKB-UniRule"/>
</dbReference>
<dbReference type="GO" id="GO:0051156">
    <property type="term" value="P:glucose 6-phosphate metabolic process"/>
    <property type="evidence" value="ECO:0007669"/>
    <property type="project" value="TreeGrafter"/>
</dbReference>
<dbReference type="GO" id="GO:0006096">
    <property type="term" value="P:glycolytic process"/>
    <property type="evidence" value="ECO:0007669"/>
    <property type="project" value="UniProtKB-UniRule"/>
</dbReference>
<dbReference type="CDD" id="cd05015">
    <property type="entry name" value="SIS_PGI_1"/>
    <property type="match status" value="1"/>
</dbReference>
<dbReference type="CDD" id="cd05016">
    <property type="entry name" value="SIS_PGI_2"/>
    <property type="match status" value="1"/>
</dbReference>
<dbReference type="FunFam" id="1.10.1390.10:FF:000001">
    <property type="entry name" value="Glucose-6-phosphate isomerase"/>
    <property type="match status" value="1"/>
</dbReference>
<dbReference type="FunFam" id="3.40.50.10490:FF:000004">
    <property type="entry name" value="Glucose-6-phosphate isomerase"/>
    <property type="match status" value="1"/>
</dbReference>
<dbReference type="Gene3D" id="1.10.1390.10">
    <property type="match status" value="1"/>
</dbReference>
<dbReference type="Gene3D" id="3.40.50.10490">
    <property type="entry name" value="Glucose-6-phosphate isomerase like protein, domain 1"/>
    <property type="match status" value="2"/>
</dbReference>
<dbReference type="HAMAP" id="MF_00473">
    <property type="entry name" value="G6P_isomerase"/>
    <property type="match status" value="1"/>
</dbReference>
<dbReference type="InterPro" id="IPR001672">
    <property type="entry name" value="G6P_Isomerase"/>
</dbReference>
<dbReference type="InterPro" id="IPR023096">
    <property type="entry name" value="G6P_Isomerase_C"/>
</dbReference>
<dbReference type="InterPro" id="IPR018189">
    <property type="entry name" value="Phosphoglucose_isomerase_CS"/>
</dbReference>
<dbReference type="InterPro" id="IPR046348">
    <property type="entry name" value="SIS_dom_sf"/>
</dbReference>
<dbReference type="InterPro" id="IPR035476">
    <property type="entry name" value="SIS_PGI_1"/>
</dbReference>
<dbReference type="InterPro" id="IPR035482">
    <property type="entry name" value="SIS_PGI_2"/>
</dbReference>
<dbReference type="NCBIfam" id="NF001211">
    <property type="entry name" value="PRK00179.1"/>
    <property type="match status" value="1"/>
</dbReference>
<dbReference type="PANTHER" id="PTHR11469">
    <property type="entry name" value="GLUCOSE-6-PHOSPHATE ISOMERASE"/>
    <property type="match status" value="1"/>
</dbReference>
<dbReference type="PANTHER" id="PTHR11469:SF1">
    <property type="entry name" value="GLUCOSE-6-PHOSPHATE ISOMERASE"/>
    <property type="match status" value="1"/>
</dbReference>
<dbReference type="Pfam" id="PF00342">
    <property type="entry name" value="PGI"/>
    <property type="match status" value="1"/>
</dbReference>
<dbReference type="PRINTS" id="PR00662">
    <property type="entry name" value="G6PISOMERASE"/>
</dbReference>
<dbReference type="SUPFAM" id="SSF53697">
    <property type="entry name" value="SIS domain"/>
    <property type="match status" value="1"/>
</dbReference>
<dbReference type="PROSITE" id="PS00765">
    <property type="entry name" value="P_GLUCOSE_ISOMERASE_1"/>
    <property type="match status" value="1"/>
</dbReference>
<dbReference type="PROSITE" id="PS00174">
    <property type="entry name" value="P_GLUCOSE_ISOMERASE_2"/>
    <property type="match status" value="1"/>
</dbReference>
<dbReference type="PROSITE" id="PS51463">
    <property type="entry name" value="P_GLUCOSE_ISOMERASE_3"/>
    <property type="match status" value="1"/>
</dbReference>
<comment type="function">
    <text evidence="1">Catalyzes the reversible isomerization of glucose-6-phosphate to fructose-6-phosphate.</text>
</comment>
<comment type="catalytic activity">
    <reaction evidence="1">
        <text>alpha-D-glucose 6-phosphate = beta-D-fructose 6-phosphate</text>
        <dbReference type="Rhea" id="RHEA:11816"/>
        <dbReference type="ChEBI" id="CHEBI:57634"/>
        <dbReference type="ChEBI" id="CHEBI:58225"/>
        <dbReference type="EC" id="5.3.1.9"/>
    </reaction>
</comment>
<comment type="pathway">
    <text evidence="1">Carbohydrate biosynthesis; gluconeogenesis.</text>
</comment>
<comment type="pathway">
    <text evidence="1">Carbohydrate degradation; glycolysis; D-glyceraldehyde 3-phosphate and glycerone phosphate from D-glucose: step 2/4.</text>
</comment>
<comment type="subcellular location">
    <subcellularLocation>
        <location evidence="1">Cytoplasm</location>
    </subcellularLocation>
</comment>
<comment type="similarity">
    <text evidence="1">Belongs to the GPI family.</text>
</comment>
<accession>Q8KDQ7</accession>
<feature type="chain" id="PRO_0000180623" description="Glucose-6-phosphate isomerase">
    <location>
        <begin position="1"/>
        <end position="559"/>
    </location>
</feature>
<feature type="active site" description="Proton donor" evidence="1">
    <location>
        <position position="352"/>
    </location>
</feature>
<feature type="active site" evidence="1">
    <location>
        <position position="383"/>
    </location>
</feature>
<feature type="active site" evidence="1">
    <location>
        <position position="511"/>
    </location>
</feature>
<evidence type="ECO:0000255" key="1">
    <source>
        <dbReference type="HAMAP-Rule" id="MF_00473"/>
    </source>
</evidence>
<proteinExistence type="inferred from homology"/>